<keyword id="KW-0067">ATP-binding</keyword>
<keyword id="KW-0963">Cytoplasm</keyword>
<keyword id="KW-0418">Kinase</keyword>
<keyword id="KW-0545">Nucleotide biosynthesis</keyword>
<keyword id="KW-0547">Nucleotide-binding</keyword>
<keyword id="KW-0808">Transferase</keyword>
<name>KAD_NEIPO</name>
<evidence type="ECO:0000255" key="1">
    <source>
        <dbReference type="HAMAP-Rule" id="MF_00235"/>
    </source>
</evidence>
<gene>
    <name evidence="1" type="primary">adk</name>
</gene>
<sequence length="174" mass="19171">FITAAFGIPQISTGDMLRAAIKAGTLLGLEAKKIIDEGGLVRDDIIIGMVKERIAQDDCKNGFLFDGFPRTLAQAEAMVEAGVDLDAVVEIDVPDSVIVDRMSGRRVHLASGRTYHVTYNPPKVEGKDDVTGEDLIQRDDDKEETVKKRLAVYHEQTEVLVDFYSKLEGEHAPK</sequence>
<reference key="1">
    <citation type="journal article" date="1996" name="J. Mol. Evol.">
        <title>A comparison of the nucleotide sequences of the adk and recA genes of pathogenic and commensal Neisseria species: evidence for extensive interspecies recombination within adk.</title>
        <authorList>
            <person name="Feil E."/>
            <person name="Zhou J."/>
            <person name="Maynard Smith J."/>
            <person name="Spratt B.G."/>
        </authorList>
    </citation>
    <scope>NUCLEOTIDE SEQUENCE [GENOMIC DNA]</scope>
    <source>
        <strain>ATCC 43768 / DSM 22809 / CCUG 18030 / CIP 100113 / NCTC 11858 / LNP N 462</strain>
    </source>
</reference>
<feature type="chain" id="PRO_0000158817" description="Adenylate kinase">
    <location>
        <begin position="1" status="less than"/>
        <end position="174" status="greater than"/>
    </location>
</feature>
<feature type="region of interest" description="NMP" evidence="1">
    <location>
        <begin position="12"/>
        <end position="41"/>
    </location>
</feature>
<feature type="region of interest" description="LID" evidence="1">
    <location>
        <begin position="104"/>
        <end position="141"/>
    </location>
</feature>
<feature type="binding site" evidence="1">
    <location>
        <position position="13"/>
    </location>
    <ligand>
        <name>AMP</name>
        <dbReference type="ChEBI" id="CHEBI:456215"/>
    </ligand>
</feature>
<feature type="binding site" evidence="1">
    <location>
        <position position="18"/>
    </location>
    <ligand>
        <name>AMP</name>
        <dbReference type="ChEBI" id="CHEBI:456215"/>
    </ligand>
</feature>
<feature type="binding site" evidence="1">
    <location>
        <begin position="39"/>
        <end position="41"/>
    </location>
    <ligand>
        <name>AMP</name>
        <dbReference type="ChEBI" id="CHEBI:456215"/>
    </ligand>
</feature>
<feature type="binding site" evidence="1">
    <location>
        <begin position="67"/>
        <end position="70"/>
    </location>
    <ligand>
        <name>AMP</name>
        <dbReference type="ChEBI" id="CHEBI:456215"/>
    </ligand>
</feature>
<feature type="binding site" evidence="1">
    <location>
        <position position="74"/>
    </location>
    <ligand>
        <name>AMP</name>
        <dbReference type="ChEBI" id="CHEBI:456215"/>
    </ligand>
</feature>
<feature type="binding site" evidence="1">
    <location>
        <position position="105"/>
    </location>
    <ligand>
        <name>ATP</name>
        <dbReference type="ChEBI" id="CHEBI:30616"/>
    </ligand>
</feature>
<feature type="binding site" evidence="1">
    <location>
        <begin position="114"/>
        <end position="115"/>
    </location>
    <ligand>
        <name>ATP</name>
        <dbReference type="ChEBI" id="CHEBI:30616"/>
    </ligand>
</feature>
<feature type="binding site" evidence="1">
    <location>
        <position position="138"/>
    </location>
    <ligand>
        <name>AMP</name>
        <dbReference type="ChEBI" id="CHEBI:456215"/>
    </ligand>
</feature>
<feature type="binding site" evidence="1">
    <location>
        <position position="149"/>
    </location>
    <ligand>
        <name>AMP</name>
        <dbReference type="ChEBI" id="CHEBI:456215"/>
    </ligand>
</feature>
<feature type="non-terminal residue">
    <location>
        <position position="1"/>
    </location>
</feature>
<feature type="non-terminal residue">
    <location>
        <position position="174"/>
    </location>
</feature>
<proteinExistence type="inferred from homology"/>
<comment type="function">
    <text evidence="1">Catalyzes the reversible transfer of the terminal phosphate group between ATP and AMP. Plays an important role in cellular energy homeostasis and in adenine nucleotide metabolism.</text>
</comment>
<comment type="catalytic activity">
    <reaction evidence="1">
        <text>AMP + ATP = 2 ADP</text>
        <dbReference type="Rhea" id="RHEA:12973"/>
        <dbReference type="ChEBI" id="CHEBI:30616"/>
        <dbReference type="ChEBI" id="CHEBI:456215"/>
        <dbReference type="ChEBI" id="CHEBI:456216"/>
        <dbReference type="EC" id="2.7.4.3"/>
    </reaction>
</comment>
<comment type="pathway">
    <text evidence="1">Purine metabolism; AMP biosynthesis via salvage pathway; AMP from ADP: step 1/1.</text>
</comment>
<comment type="subunit">
    <text evidence="1">Monomer.</text>
</comment>
<comment type="subcellular location">
    <subcellularLocation>
        <location evidence="1">Cytoplasm</location>
    </subcellularLocation>
</comment>
<comment type="domain">
    <text evidence="1">Consists of three domains, a large central CORE domain and two small peripheral domains, NMPbind and LID, which undergo movements during catalysis. The LID domain closes over the site of phosphoryl transfer upon ATP binding. Assembling and dissambling the active center during each catalytic cycle provides an effective means to prevent ATP hydrolysis.</text>
</comment>
<comment type="similarity">
    <text evidence="1">Belongs to the adenylate kinase family.</text>
</comment>
<organism>
    <name type="scientific">Neisseria polysaccharea</name>
    <dbReference type="NCBI Taxonomy" id="489"/>
    <lineage>
        <taxon>Bacteria</taxon>
        <taxon>Pseudomonadati</taxon>
        <taxon>Pseudomonadota</taxon>
        <taxon>Betaproteobacteria</taxon>
        <taxon>Neisseriales</taxon>
        <taxon>Neisseriaceae</taxon>
        <taxon>Neisseria</taxon>
    </lineage>
</organism>
<dbReference type="EC" id="2.7.4.3" evidence="1"/>
<dbReference type="EMBL" id="U57708">
    <property type="protein sequence ID" value="AAB49188.1"/>
    <property type="molecule type" value="Genomic_DNA"/>
</dbReference>
<dbReference type="SMR" id="Q59627"/>
<dbReference type="UniPathway" id="UPA00588">
    <property type="reaction ID" value="UER00649"/>
</dbReference>
<dbReference type="GO" id="GO:0005737">
    <property type="term" value="C:cytoplasm"/>
    <property type="evidence" value="ECO:0007669"/>
    <property type="project" value="UniProtKB-SubCell"/>
</dbReference>
<dbReference type="GO" id="GO:0004017">
    <property type="term" value="F:adenylate kinase activity"/>
    <property type="evidence" value="ECO:0007669"/>
    <property type="project" value="UniProtKB-EC"/>
</dbReference>
<dbReference type="GO" id="GO:0005524">
    <property type="term" value="F:ATP binding"/>
    <property type="evidence" value="ECO:0007669"/>
    <property type="project" value="UniProtKB-KW"/>
</dbReference>
<dbReference type="GO" id="GO:0044209">
    <property type="term" value="P:AMP salvage"/>
    <property type="evidence" value="ECO:0007669"/>
    <property type="project" value="UniProtKB-UniPathway"/>
</dbReference>
<dbReference type="CDD" id="cd01428">
    <property type="entry name" value="ADK"/>
    <property type="match status" value="1"/>
</dbReference>
<dbReference type="FunFam" id="3.40.50.300:FF:000106">
    <property type="entry name" value="Adenylate kinase mitochondrial"/>
    <property type="match status" value="1"/>
</dbReference>
<dbReference type="Gene3D" id="3.40.50.300">
    <property type="entry name" value="P-loop containing nucleotide triphosphate hydrolases"/>
    <property type="match status" value="1"/>
</dbReference>
<dbReference type="HAMAP" id="MF_00235">
    <property type="entry name" value="Adenylate_kinase_Adk"/>
    <property type="match status" value="1"/>
</dbReference>
<dbReference type="InterPro" id="IPR006259">
    <property type="entry name" value="Adenyl_kin_sub"/>
</dbReference>
<dbReference type="InterPro" id="IPR000850">
    <property type="entry name" value="Adenylat/UMP-CMP_kin"/>
</dbReference>
<dbReference type="InterPro" id="IPR033690">
    <property type="entry name" value="Adenylat_kinase_CS"/>
</dbReference>
<dbReference type="InterPro" id="IPR007862">
    <property type="entry name" value="Adenylate_kinase_lid-dom"/>
</dbReference>
<dbReference type="InterPro" id="IPR027417">
    <property type="entry name" value="P-loop_NTPase"/>
</dbReference>
<dbReference type="NCBIfam" id="TIGR01351">
    <property type="entry name" value="adk"/>
    <property type="match status" value="1"/>
</dbReference>
<dbReference type="NCBIfam" id="NF001379">
    <property type="entry name" value="PRK00279.1-1"/>
    <property type="match status" value="1"/>
</dbReference>
<dbReference type="PANTHER" id="PTHR23359">
    <property type="entry name" value="NUCLEOTIDE KINASE"/>
    <property type="match status" value="1"/>
</dbReference>
<dbReference type="Pfam" id="PF00406">
    <property type="entry name" value="ADK"/>
    <property type="match status" value="1"/>
</dbReference>
<dbReference type="Pfam" id="PF05191">
    <property type="entry name" value="ADK_lid"/>
    <property type="match status" value="1"/>
</dbReference>
<dbReference type="PRINTS" id="PR00094">
    <property type="entry name" value="ADENYLTKNASE"/>
</dbReference>
<dbReference type="SUPFAM" id="SSF52540">
    <property type="entry name" value="P-loop containing nucleoside triphosphate hydrolases"/>
    <property type="match status" value="1"/>
</dbReference>
<dbReference type="PROSITE" id="PS00113">
    <property type="entry name" value="ADENYLATE_KINASE"/>
    <property type="match status" value="1"/>
</dbReference>
<protein>
    <recommendedName>
        <fullName evidence="1">Adenylate kinase</fullName>
        <shortName evidence="1">AK</shortName>
        <ecNumber evidence="1">2.7.4.3</ecNumber>
    </recommendedName>
    <alternativeName>
        <fullName evidence="1">ATP-AMP transphosphorylase</fullName>
    </alternativeName>
    <alternativeName>
        <fullName evidence="1">ATP:AMP phosphotransferase</fullName>
    </alternativeName>
    <alternativeName>
        <fullName evidence="1">Adenylate monophosphate kinase</fullName>
    </alternativeName>
</protein>
<accession>Q59627</accession>